<reference key="1">
    <citation type="journal article" date="2008" name="J. Bacteriol.">
        <title>Complete genome sequence of the mosquitocidal bacterium Bacillus sphaericus C3-41 and comparison with those of closely related Bacillus species.</title>
        <authorList>
            <person name="Hu X."/>
            <person name="Fan W."/>
            <person name="Han B."/>
            <person name="Liu H."/>
            <person name="Zheng D."/>
            <person name="Li Q."/>
            <person name="Dong W."/>
            <person name="Yan J."/>
            <person name="Gao M."/>
            <person name="Berry C."/>
            <person name="Yuan Z."/>
        </authorList>
    </citation>
    <scope>NUCLEOTIDE SEQUENCE [LARGE SCALE GENOMIC DNA]</scope>
    <source>
        <strain>C3-41</strain>
    </source>
</reference>
<protein>
    <recommendedName>
        <fullName evidence="1">Adenine phosphoribosyltransferase</fullName>
        <shortName evidence="1">APRT</shortName>
        <ecNumber evidence="1">2.4.2.7</ecNumber>
    </recommendedName>
</protein>
<gene>
    <name evidence="1" type="primary">apt</name>
    <name type="ordered locus">Bsph_3913</name>
</gene>
<accession>B1HV83</accession>
<evidence type="ECO:0000255" key="1">
    <source>
        <dbReference type="HAMAP-Rule" id="MF_00004"/>
    </source>
</evidence>
<name>APT_LYSSC</name>
<sequence length="170" mass="18643">MDLKQYVTTVENWPKEGITFRDITTIMDHGPAYKYATDQIVEYAKELGAEIVVGPEARGFIIGCPVAYALEIGFAPVRKPGKLPRKVISADYGLEYGKDTLTMHNDAIKPGQKVLICDDLLATGGTVEATVRLVEQLGGQVVGCAFLIELLELNGREKLGDLNIKTLIQY</sequence>
<keyword id="KW-0963">Cytoplasm</keyword>
<keyword id="KW-0328">Glycosyltransferase</keyword>
<keyword id="KW-0660">Purine salvage</keyword>
<keyword id="KW-0808">Transferase</keyword>
<organism>
    <name type="scientific">Lysinibacillus sphaericus (strain C3-41)</name>
    <dbReference type="NCBI Taxonomy" id="444177"/>
    <lineage>
        <taxon>Bacteria</taxon>
        <taxon>Bacillati</taxon>
        <taxon>Bacillota</taxon>
        <taxon>Bacilli</taxon>
        <taxon>Bacillales</taxon>
        <taxon>Bacillaceae</taxon>
        <taxon>Lysinibacillus</taxon>
    </lineage>
</organism>
<feature type="chain" id="PRO_1000088983" description="Adenine phosphoribosyltransferase">
    <location>
        <begin position="1"/>
        <end position="170"/>
    </location>
</feature>
<proteinExistence type="inferred from homology"/>
<comment type="function">
    <text evidence="1">Catalyzes a salvage reaction resulting in the formation of AMP, that is energically less costly than de novo synthesis.</text>
</comment>
<comment type="catalytic activity">
    <reaction evidence="1">
        <text>AMP + diphosphate = 5-phospho-alpha-D-ribose 1-diphosphate + adenine</text>
        <dbReference type="Rhea" id="RHEA:16609"/>
        <dbReference type="ChEBI" id="CHEBI:16708"/>
        <dbReference type="ChEBI" id="CHEBI:33019"/>
        <dbReference type="ChEBI" id="CHEBI:58017"/>
        <dbReference type="ChEBI" id="CHEBI:456215"/>
        <dbReference type="EC" id="2.4.2.7"/>
    </reaction>
</comment>
<comment type="pathway">
    <text evidence="1">Purine metabolism; AMP biosynthesis via salvage pathway; AMP from adenine: step 1/1.</text>
</comment>
<comment type="subunit">
    <text evidence="1">Homodimer.</text>
</comment>
<comment type="subcellular location">
    <subcellularLocation>
        <location evidence="1">Cytoplasm</location>
    </subcellularLocation>
</comment>
<comment type="similarity">
    <text evidence="1">Belongs to the purine/pyrimidine phosphoribosyltransferase family.</text>
</comment>
<dbReference type="EC" id="2.4.2.7" evidence="1"/>
<dbReference type="EMBL" id="CP000817">
    <property type="protein sequence ID" value="ACA41385.1"/>
    <property type="molecule type" value="Genomic_DNA"/>
</dbReference>
<dbReference type="RefSeq" id="WP_012295430.1">
    <property type="nucleotide sequence ID" value="NC_010382.1"/>
</dbReference>
<dbReference type="SMR" id="B1HV83"/>
<dbReference type="EnsemblBacteria" id="ACA41385">
    <property type="protein sequence ID" value="ACA41385"/>
    <property type="gene ID" value="Bsph_3913"/>
</dbReference>
<dbReference type="KEGG" id="lsp:Bsph_3913"/>
<dbReference type="HOGENOM" id="CLU_063339_3_0_9"/>
<dbReference type="UniPathway" id="UPA00588">
    <property type="reaction ID" value="UER00646"/>
</dbReference>
<dbReference type="Proteomes" id="UP000002164">
    <property type="component" value="Chromosome"/>
</dbReference>
<dbReference type="GO" id="GO:0005737">
    <property type="term" value="C:cytoplasm"/>
    <property type="evidence" value="ECO:0007669"/>
    <property type="project" value="UniProtKB-SubCell"/>
</dbReference>
<dbReference type="GO" id="GO:0002055">
    <property type="term" value="F:adenine binding"/>
    <property type="evidence" value="ECO:0007669"/>
    <property type="project" value="TreeGrafter"/>
</dbReference>
<dbReference type="GO" id="GO:0003999">
    <property type="term" value="F:adenine phosphoribosyltransferase activity"/>
    <property type="evidence" value="ECO:0007669"/>
    <property type="project" value="UniProtKB-UniRule"/>
</dbReference>
<dbReference type="GO" id="GO:0016208">
    <property type="term" value="F:AMP binding"/>
    <property type="evidence" value="ECO:0007669"/>
    <property type="project" value="TreeGrafter"/>
</dbReference>
<dbReference type="GO" id="GO:0006168">
    <property type="term" value="P:adenine salvage"/>
    <property type="evidence" value="ECO:0007669"/>
    <property type="project" value="InterPro"/>
</dbReference>
<dbReference type="GO" id="GO:0044209">
    <property type="term" value="P:AMP salvage"/>
    <property type="evidence" value="ECO:0007669"/>
    <property type="project" value="UniProtKB-UniRule"/>
</dbReference>
<dbReference type="GO" id="GO:0006166">
    <property type="term" value="P:purine ribonucleoside salvage"/>
    <property type="evidence" value="ECO:0007669"/>
    <property type="project" value="UniProtKB-KW"/>
</dbReference>
<dbReference type="CDD" id="cd06223">
    <property type="entry name" value="PRTases_typeI"/>
    <property type="match status" value="1"/>
</dbReference>
<dbReference type="FunFam" id="3.40.50.2020:FF:000004">
    <property type="entry name" value="Adenine phosphoribosyltransferase"/>
    <property type="match status" value="1"/>
</dbReference>
<dbReference type="Gene3D" id="3.40.50.2020">
    <property type="match status" value="1"/>
</dbReference>
<dbReference type="HAMAP" id="MF_00004">
    <property type="entry name" value="Aden_phosphoribosyltr"/>
    <property type="match status" value="1"/>
</dbReference>
<dbReference type="InterPro" id="IPR005764">
    <property type="entry name" value="Ade_phspho_trans"/>
</dbReference>
<dbReference type="InterPro" id="IPR000836">
    <property type="entry name" value="PRibTrfase_dom"/>
</dbReference>
<dbReference type="InterPro" id="IPR029057">
    <property type="entry name" value="PRTase-like"/>
</dbReference>
<dbReference type="InterPro" id="IPR050054">
    <property type="entry name" value="UPRTase/APRTase"/>
</dbReference>
<dbReference type="NCBIfam" id="TIGR01090">
    <property type="entry name" value="apt"/>
    <property type="match status" value="1"/>
</dbReference>
<dbReference type="NCBIfam" id="NF002633">
    <property type="entry name" value="PRK02304.1-2"/>
    <property type="match status" value="1"/>
</dbReference>
<dbReference type="NCBIfam" id="NF002634">
    <property type="entry name" value="PRK02304.1-3"/>
    <property type="match status" value="1"/>
</dbReference>
<dbReference type="NCBIfam" id="NF002636">
    <property type="entry name" value="PRK02304.1-5"/>
    <property type="match status" value="1"/>
</dbReference>
<dbReference type="PANTHER" id="PTHR32315">
    <property type="entry name" value="ADENINE PHOSPHORIBOSYLTRANSFERASE"/>
    <property type="match status" value="1"/>
</dbReference>
<dbReference type="PANTHER" id="PTHR32315:SF3">
    <property type="entry name" value="ADENINE PHOSPHORIBOSYLTRANSFERASE"/>
    <property type="match status" value="1"/>
</dbReference>
<dbReference type="Pfam" id="PF00156">
    <property type="entry name" value="Pribosyltran"/>
    <property type="match status" value="1"/>
</dbReference>
<dbReference type="SUPFAM" id="SSF53271">
    <property type="entry name" value="PRTase-like"/>
    <property type="match status" value="1"/>
</dbReference>
<dbReference type="PROSITE" id="PS00103">
    <property type="entry name" value="PUR_PYR_PR_TRANSFER"/>
    <property type="match status" value="1"/>
</dbReference>